<name>TAM41_DICDI</name>
<feature type="chain" id="PRO_0000365592" description="Phosphatidate cytidylyltransferase, mitochondrial">
    <location>
        <begin position="1"/>
        <end position="427"/>
    </location>
</feature>
<feature type="region of interest" description="Disordered" evidence="3">
    <location>
        <begin position="94"/>
        <end position="113"/>
    </location>
</feature>
<feature type="compositionally biased region" description="Polar residues" evidence="3">
    <location>
        <begin position="94"/>
        <end position="106"/>
    </location>
</feature>
<gene>
    <name type="ORF">DDB_G0277049</name>
</gene>
<comment type="function">
    <text evidence="1">Catalyzes the formation of CDP-diacylglycerol (CDP-DAG) from phosphatidic acid (PA) in the mitochondrial inner membrane. Required for the biosynthesis of the dimeric phospholipid cardiolipin, which stabilizes supercomplexes of the mitochondrial respiratory chain in the mitochondrial inner membrane.</text>
</comment>
<comment type="catalytic activity">
    <reaction evidence="1">
        <text>a 1,2-diacyl-sn-glycero-3-phosphate + CTP + H(+) = a CDP-1,2-diacyl-sn-glycerol + diphosphate</text>
        <dbReference type="Rhea" id="RHEA:16229"/>
        <dbReference type="ChEBI" id="CHEBI:15378"/>
        <dbReference type="ChEBI" id="CHEBI:33019"/>
        <dbReference type="ChEBI" id="CHEBI:37563"/>
        <dbReference type="ChEBI" id="CHEBI:58332"/>
        <dbReference type="ChEBI" id="CHEBI:58608"/>
        <dbReference type="EC" id="2.7.7.41"/>
    </reaction>
    <physiologicalReaction direction="left-to-right" evidence="1">
        <dbReference type="Rhea" id="RHEA:16230"/>
    </physiologicalReaction>
</comment>
<comment type="cofactor">
    <cofactor evidence="2">
        <name>Mg(2+)</name>
        <dbReference type="ChEBI" id="CHEBI:18420"/>
    </cofactor>
</comment>
<comment type="pathway">
    <text evidence="1">Phospholipid metabolism; CDP-diacylglycerol biosynthesis; CDP-diacylglycerol from sn-glycerol 3-phosphate: step 3/3.</text>
</comment>
<comment type="subcellular location">
    <subcellularLocation>
        <location evidence="1">Mitochondrion inner membrane</location>
        <topology evidence="1">Peripheral membrane protein</topology>
        <orientation evidence="2">Matrix side</orientation>
    </subcellularLocation>
</comment>
<comment type="similarity">
    <text evidence="4">Belongs to the TAM41 family.</text>
</comment>
<protein>
    <recommendedName>
        <fullName>Phosphatidate cytidylyltransferase, mitochondrial</fullName>
        <ecNumber evidence="1">2.7.7.41</ecNumber>
    </recommendedName>
    <alternativeName>
        <fullName>CDP-diacylglycerol synthase</fullName>
        <shortName>CDP-DAG synthase</shortName>
    </alternativeName>
    <alternativeName>
        <fullName>Mitochondrial translocator assembly and maintenance protein 41 homolog</fullName>
        <shortName>TAM41</shortName>
    </alternativeName>
</protein>
<accession>Q550P4</accession>
<dbReference type="EC" id="2.7.7.41" evidence="1"/>
<dbReference type="EMBL" id="AAFI02000019">
    <property type="protein sequence ID" value="EAL69026.1"/>
    <property type="molecule type" value="Genomic_DNA"/>
</dbReference>
<dbReference type="RefSeq" id="XP_642888.1">
    <property type="nucleotide sequence ID" value="XM_637796.1"/>
</dbReference>
<dbReference type="SMR" id="Q550P4"/>
<dbReference type="FunCoup" id="Q550P4">
    <property type="interactions" value="604"/>
</dbReference>
<dbReference type="STRING" id="44689.Q550P4"/>
<dbReference type="PaxDb" id="44689-DDB0238433"/>
<dbReference type="EnsemblProtists" id="EAL69026">
    <property type="protein sequence ID" value="EAL69026"/>
    <property type="gene ID" value="DDB_G0277049"/>
</dbReference>
<dbReference type="GeneID" id="8620754"/>
<dbReference type="KEGG" id="ddi:DDB_G0277049"/>
<dbReference type="dictyBase" id="DDB_G0277049"/>
<dbReference type="VEuPathDB" id="AmoebaDB:DDB_G0277049"/>
<dbReference type="eggNOG" id="KOG2986">
    <property type="taxonomic scope" value="Eukaryota"/>
</dbReference>
<dbReference type="HOGENOM" id="CLU_030279_1_1_1"/>
<dbReference type="InParanoid" id="Q550P4"/>
<dbReference type="OMA" id="FPPIKYG"/>
<dbReference type="PhylomeDB" id="Q550P4"/>
<dbReference type="UniPathway" id="UPA00557">
    <property type="reaction ID" value="UER00614"/>
</dbReference>
<dbReference type="PRO" id="PR:Q550P4"/>
<dbReference type="Proteomes" id="UP000002195">
    <property type="component" value="Chromosome 2"/>
</dbReference>
<dbReference type="GO" id="GO:0005743">
    <property type="term" value="C:mitochondrial inner membrane"/>
    <property type="evidence" value="ECO:0007669"/>
    <property type="project" value="UniProtKB-SubCell"/>
</dbReference>
<dbReference type="GO" id="GO:0005759">
    <property type="term" value="C:mitochondrial matrix"/>
    <property type="evidence" value="ECO:0000250"/>
    <property type="project" value="dictyBase"/>
</dbReference>
<dbReference type="GO" id="GO:0005739">
    <property type="term" value="C:mitochondrion"/>
    <property type="evidence" value="ECO:0000318"/>
    <property type="project" value="GO_Central"/>
</dbReference>
<dbReference type="GO" id="GO:0004605">
    <property type="term" value="F:phosphatidate cytidylyltransferase activity"/>
    <property type="evidence" value="ECO:0000250"/>
    <property type="project" value="UniProtKB"/>
</dbReference>
<dbReference type="GO" id="GO:0032049">
    <property type="term" value="P:cardiolipin biosynthetic process"/>
    <property type="evidence" value="ECO:0000250"/>
    <property type="project" value="UniProtKB"/>
</dbReference>
<dbReference type="GO" id="GO:0016024">
    <property type="term" value="P:CDP-diacylglycerol biosynthetic process"/>
    <property type="evidence" value="ECO:0000318"/>
    <property type="project" value="GO_Central"/>
</dbReference>
<dbReference type="InterPro" id="IPR015222">
    <property type="entry name" value="Tam41"/>
</dbReference>
<dbReference type="PANTHER" id="PTHR13619">
    <property type="entry name" value="PHOSPHATIDATE CYTIDYLYLTRANSFERASE, MITOCHONDRIAL"/>
    <property type="match status" value="1"/>
</dbReference>
<dbReference type="PANTHER" id="PTHR13619:SF0">
    <property type="entry name" value="PHOSPHATIDATE CYTIDYLYLTRANSFERASE, MITOCHONDRIAL"/>
    <property type="match status" value="1"/>
</dbReference>
<dbReference type="Pfam" id="PF09139">
    <property type="entry name" value="Tam41_Mmp37"/>
    <property type="match status" value="1"/>
</dbReference>
<dbReference type="PIRSF" id="PIRSF028840">
    <property type="entry name" value="Mmp37"/>
    <property type="match status" value="1"/>
</dbReference>
<reference key="1">
    <citation type="journal article" date="2002" name="Nature">
        <title>Sequence and analysis of chromosome 2 of Dictyostelium discoideum.</title>
        <authorList>
            <person name="Gloeckner G."/>
            <person name="Eichinger L."/>
            <person name="Szafranski K."/>
            <person name="Pachebat J.A."/>
            <person name="Bankier A.T."/>
            <person name="Dear P.H."/>
            <person name="Lehmann R."/>
            <person name="Baumgart C."/>
            <person name="Parra G."/>
            <person name="Abril J.F."/>
            <person name="Guigo R."/>
            <person name="Kumpf K."/>
            <person name="Tunggal B."/>
            <person name="Cox E.C."/>
            <person name="Quail M.A."/>
            <person name="Platzer M."/>
            <person name="Rosenthal A."/>
            <person name="Noegel A.A."/>
        </authorList>
    </citation>
    <scope>NUCLEOTIDE SEQUENCE [LARGE SCALE GENOMIC DNA]</scope>
    <source>
        <strain>AX4</strain>
    </source>
</reference>
<reference key="2">
    <citation type="journal article" date="2005" name="Nature">
        <title>The genome of the social amoeba Dictyostelium discoideum.</title>
        <authorList>
            <person name="Eichinger L."/>
            <person name="Pachebat J.A."/>
            <person name="Gloeckner G."/>
            <person name="Rajandream M.A."/>
            <person name="Sucgang R."/>
            <person name="Berriman M."/>
            <person name="Song J."/>
            <person name="Olsen R."/>
            <person name="Szafranski K."/>
            <person name="Xu Q."/>
            <person name="Tunggal B."/>
            <person name="Kummerfeld S."/>
            <person name="Madera M."/>
            <person name="Konfortov B.A."/>
            <person name="Rivero F."/>
            <person name="Bankier A.T."/>
            <person name="Lehmann R."/>
            <person name="Hamlin N."/>
            <person name="Davies R."/>
            <person name="Gaudet P."/>
            <person name="Fey P."/>
            <person name="Pilcher K."/>
            <person name="Chen G."/>
            <person name="Saunders D."/>
            <person name="Sodergren E.J."/>
            <person name="Davis P."/>
            <person name="Kerhornou A."/>
            <person name="Nie X."/>
            <person name="Hall N."/>
            <person name="Anjard C."/>
            <person name="Hemphill L."/>
            <person name="Bason N."/>
            <person name="Farbrother P."/>
            <person name="Desany B."/>
            <person name="Just E."/>
            <person name="Morio T."/>
            <person name="Rost R."/>
            <person name="Churcher C.M."/>
            <person name="Cooper J."/>
            <person name="Haydock S."/>
            <person name="van Driessche N."/>
            <person name="Cronin A."/>
            <person name="Goodhead I."/>
            <person name="Muzny D.M."/>
            <person name="Mourier T."/>
            <person name="Pain A."/>
            <person name="Lu M."/>
            <person name="Harper D."/>
            <person name="Lindsay R."/>
            <person name="Hauser H."/>
            <person name="James K.D."/>
            <person name="Quiles M."/>
            <person name="Madan Babu M."/>
            <person name="Saito T."/>
            <person name="Buchrieser C."/>
            <person name="Wardroper A."/>
            <person name="Felder M."/>
            <person name="Thangavelu M."/>
            <person name="Johnson D."/>
            <person name="Knights A."/>
            <person name="Loulseged H."/>
            <person name="Mungall K.L."/>
            <person name="Oliver K."/>
            <person name="Price C."/>
            <person name="Quail M.A."/>
            <person name="Urushihara H."/>
            <person name="Hernandez J."/>
            <person name="Rabbinowitsch E."/>
            <person name="Steffen D."/>
            <person name="Sanders M."/>
            <person name="Ma J."/>
            <person name="Kohara Y."/>
            <person name="Sharp S."/>
            <person name="Simmonds M.N."/>
            <person name="Spiegler S."/>
            <person name="Tivey A."/>
            <person name="Sugano S."/>
            <person name="White B."/>
            <person name="Walker D."/>
            <person name="Woodward J.R."/>
            <person name="Winckler T."/>
            <person name="Tanaka Y."/>
            <person name="Shaulsky G."/>
            <person name="Schleicher M."/>
            <person name="Weinstock G.M."/>
            <person name="Rosenthal A."/>
            <person name="Cox E.C."/>
            <person name="Chisholm R.L."/>
            <person name="Gibbs R.A."/>
            <person name="Loomis W.F."/>
            <person name="Platzer M."/>
            <person name="Kay R.R."/>
            <person name="Williams J.G."/>
            <person name="Dear P.H."/>
            <person name="Noegel A.A."/>
            <person name="Barrell B.G."/>
            <person name="Kuspa A."/>
        </authorList>
    </citation>
    <scope>NUCLEOTIDE SEQUENCE [LARGE SCALE GENOMIC DNA]</scope>
    <source>
        <strain>AX4</strain>
    </source>
</reference>
<organism>
    <name type="scientific">Dictyostelium discoideum</name>
    <name type="common">Social amoeba</name>
    <dbReference type="NCBI Taxonomy" id="44689"/>
    <lineage>
        <taxon>Eukaryota</taxon>
        <taxon>Amoebozoa</taxon>
        <taxon>Evosea</taxon>
        <taxon>Eumycetozoa</taxon>
        <taxon>Dictyostelia</taxon>
        <taxon>Dictyosteliales</taxon>
        <taxon>Dictyosteliaceae</taxon>
        <taxon>Dictyostelium</taxon>
    </lineage>
</organism>
<sequence>MIRNLTLLSKSSLDPKCLILKHSNKNLNNYFKQITFRYYSKTNPIIKQQNHNNINNYNNTTPETQERINELLKLFPPIKYGFAYGSGVISQKGYNRNGDGSTSTENPSKKEEQSPMIDLIFAVENSTKWHSLNLVNNQSHYSFLGLMGAHIVAKVQYMNAKIYFNTLLEHNGIKFKYGVIEYKDLIDDLKNWKTLYLSGRMQKPIFNLPTSSTEGLKEIQEINSEYNLKNAVITSLLMLPETFTEYDLYHTISKLSYSGDIRMKGAENPMKTHNIVINNIDGFRSLYFPIINDHLTQYLNVILENGDEVNSSLILSQNNNNKNNNKNETTTTAAPKMVTFKSKQDPMNYLNLLMMLPGSIKSTMLKEVRNNMKLMKSDEKIDPTILHNLIFMIVSKSSFAQTVKGVFTAGISKSLNYMKLKLKKNKK</sequence>
<proteinExistence type="inferred from homology"/>
<evidence type="ECO:0000250" key="1">
    <source>
        <dbReference type="UniProtKB" id="D3ZKT0"/>
    </source>
</evidence>
<evidence type="ECO:0000250" key="2">
    <source>
        <dbReference type="UniProtKB" id="P53230"/>
    </source>
</evidence>
<evidence type="ECO:0000256" key="3">
    <source>
        <dbReference type="SAM" id="MobiDB-lite"/>
    </source>
</evidence>
<evidence type="ECO:0000305" key="4"/>
<keyword id="KW-0444">Lipid biosynthesis</keyword>
<keyword id="KW-0443">Lipid metabolism</keyword>
<keyword id="KW-0460">Magnesium</keyword>
<keyword id="KW-0472">Membrane</keyword>
<keyword id="KW-0496">Mitochondrion</keyword>
<keyword id="KW-0999">Mitochondrion inner membrane</keyword>
<keyword id="KW-0548">Nucleotidyltransferase</keyword>
<keyword id="KW-0594">Phospholipid biosynthesis</keyword>
<keyword id="KW-1208">Phospholipid metabolism</keyword>
<keyword id="KW-1185">Reference proteome</keyword>
<keyword id="KW-0808">Transferase</keyword>